<name>RK28_GRATL</name>
<sequence>MVKECTLTGKKSNNGYTVSHSHIRTKKIQHINLQTKKIWSDKQKRWIKIKICTKAIKSLHKLKV</sequence>
<dbReference type="EMBL" id="AY673996">
    <property type="protein sequence ID" value="AAT79743.1"/>
    <property type="molecule type" value="Genomic_DNA"/>
</dbReference>
<dbReference type="RefSeq" id="YP_063668.1">
    <property type="nucleotide sequence ID" value="NC_006137.1"/>
</dbReference>
<dbReference type="SMR" id="Q6B8P2"/>
<dbReference type="GeneID" id="2944070"/>
<dbReference type="GO" id="GO:0009507">
    <property type="term" value="C:chloroplast"/>
    <property type="evidence" value="ECO:0007669"/>
    <property type="project" value="UniProtKB-SubCell"/>
</dbReference>
<dbReference type="GO" id="GO:1990904">
    <property type="term" value="C:ribonucleoprotein complex"/>
    <property type="evidence" value="ECO:0007669"/>
    <property type="project" value="UniProtKB-KW"/>
</dbReference>
<dbReference type="GO" id="GO:0005840">
    <property type="term" value="C:ribosome"/>
    <property type="evidence" value="ECO:0007669"/>
    <property type="project" value="UniProtKB-KW"/>
</dbReference>
<dbReference type="GO" id="GO:0003735">
    <property type="term" value="F:structural constituent of ribosome"/>
    <property type="evidence" value="ECO:0007669"/>
    <property type="project" value="InterPro"/>
</dbReference>
<dbReference type="GO" id="GO:0006412">
    <property type="term" value="P:translation"/>
    <property type="evidence" value="ECO:0007669"/>
    <property type="project" value="UniProtKB-UniRule"/>
</dbReference>
<dbReference type="Gene3D" id="2.30.170.40">
    <property type="entry name" value="Ribosomal protein L28/L24"/>
    <property type="match status" value="1"/>
</dbReference>
<dbReference type="HAMAP" id="MF_00373">
    <property type="entry name" value="Ribosomal_bL28"/>
    <property type="match status" value="1"/>
</dbReference>
<dbReference type="InterPro" id="IPR050096">
    <property type="entry name" value="Bacterial_rp_bL28"/>
</dbReference>
<dbReference type="InterPro" id="IPR026569">
    <property type="entry name" value="Ribosomal_bL28"/>
</dbReference>
<dbReference type="InterPro" id="IPR034704">
    <property type="entry name" value="Ribosomal_bL28/bL31-like_sf"/>
</dbReference>
<dbReference type="InterPro" id="IPR001383">
    <property type="entry name" value="Ribosomal_bL28_bact-type"/>
</dbReference>
<dbReference type="InterPro" id="IPR037147">
    <property type="entry name" value="Ribosomal_bL28_sf"/>
</dbReference>
<dbReference type="NCBIfam" id="TIGR00009">
    <property type="entry name" value="L28"/>
    <property type="match status" value="1"/>
</dbReference>
<dbReference type="PANTHER" id="PTHR39080">
    <property type="entry name" value="50S RIBOSOMAL PROTEIN L28"/>
    <property type="match status" value="1"/>
</dbReference>
<dbReference type="PANTHER" id="PTHR39080:SF1">
    <property type="entry name" value="LARGE RIBOSOMAL SUBUNIT PROTEIN BL28A"/>
    <property type="match status" value="1"/>
</dbReference>
<dbReference type="Pfam" id="PF00830">
    <property type="entry name" value="Ribosomal_L28"/>
    <property type="match status" value="1"/>
</dbReference>
<dbReference type="SUPFAM" id="SSF143800">
    <property type="entry name" value="L28p-like"/>
    <property type="match status" value="1"/>
</dbReference>
<feature type="chain" id="PRO_0000178603" description="Large ribosomal subunit protein bL28c">
    <location>
        <begin position="1"/>
        <end position="64"/>
    </location>
</feature>
<reference key="1">
    <citation type="journal article" date="2004" name="J. Mol. Evol.">
        <title>Comparative analysis of the complete plastid genome sequence of the red alga Gracilaria tenuistipitata var. liui provides insights into the evolution of rhodoplasts and their relationship to other plastids.</title>
        <authorList>
            <person name="Hagopian J.C."/>
            <person name="Reis M."/>
            <person name="Kitajima J.P."/>
            <person name="Bhattacharya D."/>
            <person name="de Oliveira M.C."/>
        </authorList>
    </citation>
    <scope>NUCLEOTIDE SEQUENCE [LARGE SCALE GENOMIC DNA]</scope>
</reference>
<organism>
    <name type="scientific">Gracilaria tenuistipitata var. liui</name>
    <name type="common">Red alga</name>
    <dbReference type="NCBI Taxonomy" id="285951"/>
    <lineage>
        <taxon>Eukaryota</taxon>
        <taxon>Rhodophyta</taxon>
        <taxon>Florideophyceae</taxon>
        <taxon>Rhodymeniophycidae</taxon>
        <taxon>Gracilariales</taxon>
        <taxon>Gracilariaceae</taxon>
        <taxon>Gracilaria</taxon>
        <taxon>Gracilaria tenuistipitata</taxon>
    </lineage>
</organism>
<accession>Q6B8P2</accession>
<gene>
    <name evidence="1" type="primary">rpl28</name>
    <name type="ordered locus">Grc000162</name>
</gene>
<geneLocation type="chloroplast"/>
<comment type="subcellular location">
    <subcellularLocation>
        <location>Plastid</location>
        <location>Chloroplast</location>
    </subcellularLocation>
</comment>
<comment type="similarity">
    <text evidence="1">Belongs to the bacterial ribosomal protein bL28 family.</text>
</comment>
<evidence type="ECO:0000255" key="1">
    <source>
        <dbReference type="HAMAP-Rule" id="MF_00373"/>
    </source>
</evidence>
<evidence type="ECO:0000305" key="2"/>
<protein>
    <recommendedName>
        <fullName evidence="1">Large ribosomal subunit protein bL28c</fullName>
    </recommendedName>
    <alternativeName>
        <fullName evidence="2">50S ribosomal protein L28, chloroplastic</fullName>
    </alternativeName>
</protein>
<keyword id="KW-0150">Chloroplast</keyword>
<keyword id="KW-0934">Plastid</keyword>
<keyword id="KW-0687">Ribonucleoprotein</keyword>
<keyword id="KW-0689">Ribosomal protein</keyword>
<proteinExistence type="inferred from homology"/>